<protein>
    <recommendedName>
        <fullName evidence="1">Pyridoxal 5'-phosphate synthase subunit PdxS</fullName>
        <shortName evidence="1">PLP synthase subunit PdxS</shortName>
        <ecNumber evidence="1">4.3.3.6</ecNumber>
    </recommendedName>
    <alternativeName>
        <fullName evidence="1">Pdx1</fullName>
    </alternativeName>
</protein>
<feature type="chain" id="PRO_0000109404" description="Pyridoxal 5'-phosphate synthase subunit PdxS">
    <location>
        <begin position="1"/>
        <end position="303"/>
    </location>
</feature>
<feature type="active site" description="Schiff-base intermediate with D-ribose 5-phosphate" evidence="1">
    <location>
        <position position="90"/>
    </location>
</feature>
<feature type="binding site" evidence="1">
    <location>
        <position position="33"/>
    </location>
    <ligand>
        <name>D-ribose 5-phosphate</name>
        <dbReference type="ChEBI" id="CHEBI:78346"/>
    </ligand>
</feature>
<feature type="binding site" evidence="1">
    <location>
        <position position="162"/>
    </location>
    <ligand>
        <name>D-ribose 5-phosphate</name>
        <dbReference type="ChEBI" id="CHEBI:78346"/>
    </ligand>
</feature>
<feature type="binding site" evidence="1">
    <location>
        <position position="174"/>
    </location>
    <ligand>
        <name>D-glyceraldehyde 3-phosphate</name>
        <dbReference type="ChEBI" id="CHEBI:59776"/>
    </ligand>
</feature>
<feature type="binding site" evidence="1">
    <location>
        <position position="223"/>
    </location>
    <ligand>
        <name>D-ribose 5-phosphate</name>
        <dbReference type="ChEBI" id="CHEBI:78346"/>
    </ligand>
</feature>
<feature type="binding site" evidence="1">
    <location>
        <begin position="244"/>
        <end position="245"/>
    </location>
    <ligand>
        <name>D-ribose 5-phosphate</name>
        <dbReference type="ChEBI" id="CHEBI:78346"/>
    </ligand>
</feature>
<keyword id="KW-0456">Lyase</keyword>
<keyword id="KW-0663">Pyridoxal phosphate</keyword>
<keyword id="KW-1185">Reference proteome</keyword>
<keyword id="KW-0704">Schiff base</keyword>
<accession>Q73WF0</accession>
<evidence type="ECO:0000255" key="1">
    <source>
        <dbReference type="HAMAP-Rule" id="MF_01824"/>
    </source>
</evidence>
<proteinExistence type="inferred from homology"/>
<dbReference type="EC" id="4.3.3.6" evidence="1"/>
<dbReference type="EMBL" id="AE016958">
    <property type="protein sequence ID" value="AAS05027.1"/>
    <property type="molecule type" value="Genomic_DNA"/>
</dbReference>
<dbReference type="RefSeq" id="WP_003878553.1">
    <property type="nucleotide sequence ID" value="NC_002944.2"/>
</dbReference>
<dbReference type="SMR" id="Q73WF0"/>
<dbReference type="STRING" id="262316.MAP_2710c"/>
<dbReference type="GeneID" id="75270880"/>
<dbReference type="KEGG" id="mpa:MAP_2710c"/>
<dbReference type="eggNOG" id="COG0214">
    <property type="taxonomic scope" value="Bacteria"/>
</dbReference>
<dbReference type="HOGENOM" id="CLU_055352_1_0_11"/>
<dbReference type="UniPathway" id="UPA00245"/>
<dbReference type="Proteomes" id="UP000000580">
    <property type="component" value="Chromosome"/>
</dbReference>
<dbReference type="GO" id="GO:0036381">
    <property type="term" value="F:pyridoxal 5'-phosphate synthase (glutamine hydrolysing) activity"/>
    <property type="evidence" value="ECO:0007669"/>
    <property type="project" value="UniProtKB-UniRule"/>
</dbReference>
<dbReference type="GO" id="GO:0006520">
    <property type="term" value="P:amino acid metabolic process"/>
    <property type="evidence" value="ECO:0007669"/>
    <property type="project" value="TreeGrafter"/>
</dbReference>
<dbReference type="GO" id="GO:0042823">
    <property type="term" value="P:pyridoxal phosphate biosynthetic process"/>
    <property type="evidence" value="ECO:0007669"/>
    <property type="project" value="UniProtKB-UniRule"/>
</dbReference>
<dbReference type="GO" id="GO:0008615">
    <property type="term" value="P:pyridoxine biosynthetic process"/>
    <property type="evidence" value="ECO:0007669"/>
    <property type="project" value="TreeGrafter"/>
</dbReference>
<dbReference type="CDD" id="cd04727">
    <property type="entry name" value="pdxS"/>
    <property type="match status" value="1"/>
</dbReference>
<dbReference type="FunFam" id="3.20.20.70:FF:000001">
    <property type="entry name" value="Pyridoxine biosynthesis protein PDX1"/>
    <property type="match status" value="1"/>
</dbReference>
<dbReference type="Gene3D" id="3.20.20.70">
    <property type="entry name" value="Aldolase class I"/>
    <property type="match status" value="1"/>
</dbReference>
<dbReference type="HAMAP" id="MF_01824">
    <property type="entry name" value="PdxS"/>
    <property type="match status" value="1"/>
</dbReference>
<dbReference type="InterPro" id="IPR013785">
    <property type="entry name" value="Aldolase_TIM"/>
</dbReference>
<dbReference type="InterPro" id="IPR001852">
    <property type="entry name" value="PdxS/SNZ"/>
</dbReference>
<dbReference type="InterPro" id="IPR033755">
    <property type="entry name" value="PdxS/SNZ_N"/>
</dbReference>
<dbReference type="InterPro" id="IPR011060">
    <property type="entry name" value="RibuloseP-bd_barrel"/>
</dbReference>
<dbReference type="NCBIfam" id="NF003215">
    <property type="entry name" value="PRK04180.1"/>
    <property type="match status" value="1"/>
</dbReference>
<dbReference type="NCBIfam" id="TIGR00343">
    <property type="entry name" value="pyridoxal 5'-phosphate synthase lyase subunit PdxS"/>
    <property type="match status" value="1"/>
</dbReference>
<dbReference type="PANTHER" id="PTHR31829">
    <property type="entry name" value="PYRIDOXAL 5'-PHOSPHATE SYNTHASE SUBUNIT SNZ1-RELATED"/>
    <property type="match status" value="1"/>
</dbReference>
<dbReference type="PANTHER" id="PTHR31829:SF0">
    <property type="entry name" value="PYRIDOXAL 5'-PHOSPHATE SYNTHASE SUBUNIT SNZ1-RELATED"/>
    <property type="match status" value="1"/>
</dbReference>
<dbReference type="Pfam" id="PF01680">
    <property type="entry name" value="SOR_SNZ"/>
    <property type="match status" value="1"/>
</dbReference>
<dbReference type="PIRSF" id="PIRSF029271">
    <property type="entry name" value="Pdx1"/>
    <property type="match status" value="1"/>
</dbReference>
<dbReference type="SUPFAM" id="SSF51366">
    <property type="entry name" value="Ribulose-phoshate binding barrel"/>
    <property type="match status" value="1"/>
</dbReference>
<dbReference type="PROSITE" id="PS01235">
    <property type="entry name" value="PDXS_SNZ_1"/>
    <property type="match status" value="1"/>
</dbReference>
<dbReference type="PROSITE" id="PS51129">
    <property type="entry name" value="PDXS_SNZ_2"/>
    <property type="match status" value="1"/>
</dbReference>
<name>PDXS_MYCPA</name>
<comment type="function">
    <text evidence="1">Catalyzes the formation of pyridoxal 5'-phosphate from ribose 5-phosphate (RBP), glyceraldehyde 3-phosphate (G3P) and ammonia. The ammonia is provided by the PdxT subunit. Can also use ribulose 5-phosphate and dihydroxyacetone phosphate as substrates, resulting from enzyme-catalyzed isomerization of RBP and G3P, respectively.</text>
</comment>
<comment type="catalytic activity">
    <reaction evidence="1">
        <text>aldehydo-D-ribose 5-phosphate + D-glyceraldehyde 3-phosphate + L-glutamine = pyridoxal 5'-phosphate + L-glutamate + phosphate + 3 H2O + H(+)</text>
        <dbReference type="Rhea" id="RHEA:31507"/>
        <dbReference type="ChEBI" id="CHEBI:15377"/>
        <dbReference type="ChEBI" id="CHEBI:15378"/>
        <dbReference type="ChEBI" id="CHEBI:29985"/>
        <dbReference type="ChEBI" id="CHEBI:43474"/>
        <dbReference type="ChEBI" id="CHEBI:58273"/>
        <dbReference type="ChEBI" id="CHEBI:58359"/>
        <dbReference type="ChEBI" id="CHEBI:59776"/>
        <dbReference type="ChEBI" id="CHEBI:597326"/>
        <dbReference type="EC" id="4.3.3.6"/>
    </reaction>
</comment>
<comment type="pathway">
    <text evidence="1">Cofactor biosynthesis; pyridoxal 5'-phosphate biosynthesis.</text>
</comment>
<comment type="subunit">
    <text evidence="1">In the presence of PdxT, forms a dodecamer of heterodimers.</text>
</comment>
<comment type="similarity">
    <text evidence="1">Belongs to the PdxS/SNZ family.</text>
</comment>
<reference key="1">
    <citation type="journal article" date="2005" name="Proc. Natl. Acad. Sci. U.S.A.">
        <title>The complete genome sequence of Mycobacterium avium subspecies paratuberculosis.</title>
        <authorList>
            <person name="Li L."/>
            <person name="Bannantine J.P."/>
            <person name="Zhang Q."/>
            <person name="Amonsin A."/>
            <person name="May B.J."/>
            <person name="Alt D."/>
            <person name="Banerji N."/>
            <person name="Kanjilal S."/>
            <person name="Kapur V."/>
        </authorList>
    </citation>
    <scope>NUCLEOTIDE SEQUENCE [LARGE SCALE GENOMIC DNA]</scope>
    <source>
        <strain>ATCC BAA-968 / K-10</strain>
    </source>
</reference>
<organism>
    <name type="scientific">Mycolicibacterium paratuberculosis (strain ATCC BAA-968 / K-10)</name>
    <name type="common">Mycobacterium paratuberculosis</name>
    <dbReference type="NCBI Taxonomy" id="262316"/>
    <lineage>
        <taxon>Bacteria</taxon>
        <taxon>Bacillati</taxon>
        <taxon>Actinomycetota</taxon>
        <taxon>Actinomycetes</taxon>
        <taxon>Mycobacteriales</taxon>
        <taxon>Mycobacteriaceae</taxon>
        <taxon>Mycobacterium</taxon>
        <taxon>Mycobacterium avium complex (MAC)</taxon>
    </lineage>
</organism>
<gene>
    <name evidence="1" type="primary">pdxS</name>
    <name type="ordered locus">MAP_2710c</name>
</gene>
<sequence length="303" mass="31964">MNTAHSPDGSGRTGTARVKRGMAEMLKGGVIMDVVTPEQAKIAEGAGAVAVMALERVPADIRAQGGVSRMSDPDMIEGIISAVTIPVMAKARIGHFVEAQILQSLGVDYIDESEVLTPADYTHHIDKWKFTVPFVCGATNLGEALRRINEGAAMIRSKGEAGTGDVSNATTHMRAIGGEIRRLMSLSEDELYVAAKELQAPYELVVEVARAGKLPVTLFTAGGIATPADAAMMMQLGAEGVFVGSGIFKSGDPAQRAAAIVKATTFYDDPDVLAKVSRGLGEAMVGINVEQIAQPERLAERGW</sequence>